<evidence type="ECO:0000256" key="1">
    <source>
        <dbReference type="SAM" id="MobiDB-lite"/>
    </source>
</evidence>
<evidence type="ECO:0000269" key="2">
    <source>
    </source>
</evidence>
<evidence type="ECO:0000269" key="3">
    <source>
    </source>
</evidence>
<evidence type="ECO:0000269" key="4">
    <source>
    </source>
</evidence>
<evidence type="ECO:0000305" key="5"/>
<evidence type="ECO:0007744" key="6">
    <source>
    </source>
</evidence>
<evidence type="ECO:0007744" key="7">
    <source>
    </source>
</evidence>
<protein>
    <recommendedName>
        <fullName>Phosphopantothenoylcysteine decarboxylase subunit VHS3</fullName>
    </recommendedName>
    <alternativeName>
        <fullName>Viable in a HAL3 SIT4 background protein 3</fullName>
    </alternativeName>
</protein>
<feature type="chain" id="PRO_0000182038" description="Phosphopantothenoylcysteine decarboxylase subunit VHS3">
    <location>
        <begin position="1"/>
        <end position="674"/>
    </location>
</feature>
<feature type="region of interest" description="Disordered" evidence="1">
    <location>
        <begin position="1"/>
        <end position="164"/>
    </location>
</feature>
<feature type="region of interest" description="Disordered" evidence="1">
    <location>
        <begin position="190"/>
        <end position="230"/>
    </location>
</feature>
<feature type="region of interest" description="Disordered" evidence="1">
    <location>
        <begin position="348"/>
        <end position="368"/>
    </location>
</feature>
<feature type="region of interest" description="Disordered" evidence="1">
    <location>
        <begin position="384"/>
        <end position="426"/>
    </location>
</feature>
<feature type="region of interest" description="Disordered" evidence="1">
    <location>
        <begin position="575"/>
        <end position="674"/>
    </location>
</feature>
<feature type="compositionally biased region" description="Polar residues" evidence="1">
    <location>
        <begin position="15"/>
        <end position="81"/>
    </location>
</feature>
<feature type="compositionally biased region" description="Polar residues" evidence="1">
    <location>
        <begin position="106"/>
        <end position="116"/>
    </location>
</feature>
<feature type="compositionally biased region" description="Basic and acidic residues" evidence="1">
    <location>
        <begin position="137"/>
        <end position="150"/>
    </location>
</feature>
<feature type="compositionally biased region" description="Polar residues" evidence="1">
    <location>
        <begin position="152"/>
        <end position="164"/>
    </location>
</feature>
<feature type="compositionally biased region" description="Basic and acidic residues" evidence="1">
    <location>
        <begin position="198"/>
        <end position="212"/>
    </location>
</feature>
<feature type="compositionally biased region" description="Low complexity" evidence="1">
    <location>
        <begin position="214"/>
        <end position="230"/>
    </location>
</feature>
<feature type="compositionally biased region" description="Polar residues" evidence="1">
    <location>
        <begin position="351"/>
        <end position="368"/>
    </location>
</feature>
<feature type="compositionally biased region" description="Low complexity" evidence="1">
    <location>
        <begin position="384"/>
        <end position="395"/>
    </location>
</feature>
<feature type="compositionally biased region" description="Polar residues" evidence="1">
    <location>
        <begin position="403"/>
        <end position="426"/>
    </location>
</feature>
<feature type="compositionally biased region" description="Acidic residues" evidence="1">
    <location>
        <begin position="580"/>
        <end position="591"/>
    </location>
</feature>
<feature type="compositionally biased region" description="Basic and acidic residues" evidence="1">
    <location>
        <begin position="592"/>
        <end position="602"/>
    </location>
</feature>
<feature type="compositionally biased region" description="Acidic residues" evidence="1">
    <location>
        <begin position="603"/>
        <end position="660"/>
    </location>
</feature>
<feature type="compositionally biased region" description="Basic and acidic residues" evidence="1">
    <location>
        <begin position="661"/>
        <end position="674"/>
    </location>
</feature>
<feature type="modified residue" description="Phosphothreonine" evidence="6 7">
    <location>
        <position position="90"/>
    </location>
</feature>
<feature type="mutagenesis site" description="Does not strongly affect the phosphatase inhibitor function but abolishes PPCDC activity." evidence="3 4">
    <original>H</original>
    <variation>A</variation>
    <location>
        <position position="459"/>
    </location>
</feature>
<reference key="1">
    <citation type="journal article" date="1997" name="Yeast">
        <title>The sequence of a 54.7 kb fragment of yeast chromosome XV reveals the presence of two tRNAs and 24 new open reading frames.</title>
        <authorList>
            <person name="Valens M."/>
            <person name="Bohn C."/>
            <person name="Daignan-Fornier B."/>
            <person name="Dang V.-D."/>
            <person name="Bolotin-Fukuhara M."/>
        </authorList>
    </citation>
    <scope>NUCLEOTIDE SEQUENCE [GENOMIC DNA]</scope>
</reference>
<reference key="2">
    <citation type="journal article" date="1997" name="Nature">
        <title>The nucleotide sequence of Saccharomyces cerevisiae chromosome XV.</title>
        <authorList>
            <person name="Dujon B."/>
            <person name="Albermann K."/>
            <person name="Aldea M."/>
            <person name="Alexandraki D."/>
            <person name="Ansorge W."/>
            <person name="Arino J."/>
            <person name="Benes V."/>
            <person name="Bohn C."/>
            <person name="Bolotin-Fukuhara M."/>
            <person name="Bordonne R."/>
            <person name="Boyer J."/>
            <person name="Camasses A."/>
            <person name="Casamayor A."/>
            <person name="Casas C."/>
            <person name="Cheret G."/>
            <person name="Cziepluch C."/>
            <person name="Daignan-Fornier B."/>
            <person name="Dang V.-D."/>
            <person name="de Haan M."/>
            <person name="Delius H."/>
            <person name="Durand P."/>
            <person name="Fairhead C."/>
            <person name="Feldmann H."/>
            <person name="Gaillon L."/>
            <person name="Galisson F."/>
            <person name="Gamo F.-J."/>
            <person name="Gancedo C."/>
            <person name="Goffeau A."/>
            <person name="Goulding S.E."/>
            <person name="Grivell L.A."/>
            <person name="Habbig B."/>
            <person name="Hand N.J."/>
            <person name="Hani J."/>
            <person name="Hattenhorst U."/>
            <person name="Hebling U."/>
            <person name="Hernando Y."/>
            <person name="Herrero E."/>
            <person name="Heumann K."/>
            <person name="Hiesel R."/>
            <person name="Hilger F."/>
            <person name="Hofmann B."/>
            <person name="Hollenberg C.P."/>
            <person name="Hughes B."/>
            <person name="Jauniaux J.-C."/>
            <person name="Kalogeropoulos A."/>
            <person name="Katsoulou C."/>
            <person name="Kordes E."/>
            <person name="Lafuente M.J."/>
            <person name="Landt O."/>
            <person name="Louis E.J."/>
            <person name="Maarse A.C."/>
            <person name="Madania A."/>
            <person name="Mannhaupt G."/>
            <person name="Marck C."/>
            <person name="Martin R.P."/>
            <person name="Mewes H.-W."/>
            <person name="Michaux G."/>
            <person name="Paces V."/>
            <person name="Parle-McDermott A.G."/>
            <person name="Pearson B.M."/>
            <person name="Perrin A."/>
            <person name="Pettersson B."/>
            <person name="Poch O."/>
            <person name="Pohl T.M."/>
            <person name="Poirey R."/>
            <person name="Portetelle D."/>
            <person name="Pujol A."/>
            <person name="Purnelle B."/>
            <person name="Ramezani Rad M."/>
            <person name="Rechmann S."/>
            <person name="Schwager C."/>
            <person name="Schweizer M."/>
            <person name="Sor F."/>
            <person name="Sterky F."/>
            <person name="Tarassov I.A."/>
            <person name="Teodoru C."/>
            <person name="Tettelin H."/>
            <person name="Thierry A."/>
            <person name="Tobiasch E."/>
            <person name="Tzermia M."/>
            <person name="Uhlen M."/>
            <person name="Unseld M."/>
            <person name="Valens M."/>
            <person name="Vandenbol M."/>
            <person name="Vetter I."/>
            <person name="Vlcek C."/>
            <person name="Voet M."/>
            <person name="Volckaert G."/>
            <person name="Voss H."/>
            <person name="Wambutt R."/>
            <person name="Wedler H."/>
            <person name="Wiemann S."/>
            <person name="Winsor B."/>
            <person name="Wolfe K.H."/>
            <person name="Zollner A."/>
            <person name="Zumstein E."/>
            <person name="Kleine K."/>
        </authorList>
    </citation>
    <scope>NUCLEOTIDE SEQUENCE [LARGE SCALE GENOMIC DNA]</scope>
    <source>
        <strain>ATCC 204508 / S288c</strain>
    </source>
</reference>
<reference key="3">
    <citation type="journal article" date="2014" name="G3 (Bethesda)">
        <title>The reference genome sequence of Saccharomyces cerevisiae: Then and now.</title>
        <authorList>
            <person name="Engel S.R."/>
            <person name="Dietrich F.S."/>
            <person name="Fisk D.G."/>
            <person name="Binkley G."/>
            <person name="Balakrishnan R."/>
            <person name="Costanzo M.C."/>
            <person name="Dwight S.S."/>
            <person name="Hitz B.C."/>
            <person name="Karra K."/>
            <person name="Nash R.S."/>
            <person name="Weng S."/>
            <person name="Wong E.D."/>
            <person name="Lloyd P."/>
            <person name="Skrzypek M.S."/>
            <person name="Miyasato S.R."/>
            <person name="Simison M."/>
            <person name="Cherry J.M."/>
        </authorList>
    </citation>
    <scope>GENOME REANNOTATION</scope>
    <source>
        <strain>ATCC 204508 / S288c</strain>
    </source>
</reference>
<reference key="4">
    <citation type="journal article" date="2003" name="Mol. Cell">
        <title>Assigning function to yeast proteins by integration of technologies.</title>
        <authorList>
            <person name="Hazbun T.R."/>
            <person name="Malmstroem L."/>
            <person name="Anderson S."/>
            <person name="Graczyk B.J."/>
            <person name="Fox B."/>
            <person name="Riffle M."/>
            <person name="Sundin B.A."/>
            <person name="Aranda J.D."/>
            <person name="McDonald W.H."/>
            <person name="Chiu C.-H."/>
            <person name="Snydsman B.E."/>
            <person name="Bradley P."/>
            <person name="Muller E.G.D."/>
            <person name="Fields S."/>
            <person name="Baker D."/>
            <person name="Yates J.R. III"/>
            <person name="Davis T.N."/>
        </authorList>
    </citation>
    <scope>IDENTIFICATION BY MASS SPECTROMETRY</scope>
</reference>
<reference key="5">
    <citation type="journal article" date="2003" name="Yeast">
        <title>Identification of multicopy suppressors of cell cycle arrest at the G1-S transition in Saccharomyces cerevisiae.</title>
        <authorList>
            <person name="Munoz I."/>
            <person name="Simon E."/>
            <person name="Casals N."/>
            <person name="Clotet J."/>
            <person name="Arino J."/>
        </authorList>
    </citation>
    <scope>FUNCTION</scope>
</reference>
<reference key="6">
    <citation type="journal article" date="2004" name="J. Biol. Chem.">
        <title>Functional characterization of the Saccharomyces cerevisiae VHS3 gene. A regulatory subunit of the Ppz1 protein phosphatase with novel, phosphatase-unrelated functions.</title>
        <authorList>
            <person name="Ruiz A."/>
            <person name="Munoz I."/>
            <person name="Serrano R."/>
            <person name="Gonzalez A."/>
            <person name="Simon E."/>
            <person name="Arino J."/>
        </authorList>
    </citation>
    <scope>FUNCTION</scope>
    <scope>INTERACTION WITH PPZ1</scope>
    <scope>MUTAGENESIS OF HIS-459</scope>
</reference>
<reference key="7">
    <citation type="journal article" date="2007" name="J. Proteome Res.">
        <title>Large-scale phosphorylation analysis of alpha-factor-arrested Saccharomyces cerevisiae.</title>
        <authorList>
            <person name="Li X."/>
            <person name="Gerber S.A."/>
            <person name="Rudner A.D."/>
            <person name="Beausoleil S.A."/>
            <person name="Haas W."/>
            <person name="Villen J."/>
            <person name="Elias J.E."/>
            <person name="Gygi S.P."/>
        </authorList>
    </citation>
    <scope>PHOSPHORYLATION [LARGE SCALE ANALYSIS] AT THR-90</scope>
    <scope>IDENTIFICATION BY MASS SPECTROMETRY [LARGE SCALE ANALYSIS]</scope>
    <source>
        <strain>ADR376</strain>
    </source>
</reference>
<reference key="8">
    <citation type="journal article" date="2008" name="Mol. Cell. Proteomics">
        <title>A multidimensional chromatography technology for in-depth phosphoproteome analysis.</title>
        <authorList>
            <person name="Albuquerque C.P."/>
            <person name="Smolka M.B."/>
            <person name="Payne S.H."/>
            <person name="Bafna V."/>
            <person name="Eng J."/>
            <person name="Zhou H."/>
        </authorList>
    </citation>
    <scope>PHOSPHORYLATION [LARGE SCALE ANALYSIS] AT THR-90</scope>
    <scope>IDENTIFICATION BY MASS SPECTROMETRY [LARGE SCALE ANALYSIS]</scope>
</reference>
<reference key="9">
    <citation type="journal article" date="2009" name="Nat. Chem. Biol.">
        <title>Moonlighting proteins Hal3 and Vhs3 form a heteromeric PPCDC with Ykl088w in yeast CoA biosynthesis.</title>
        <authorList>
            <person name="Ruiz A."/>
            <person name="Gonzalez A."/>
            <person name="Munoz I."/>
            <person name="Serrano R."/>
            <person name="Abrie J.A."/>
            <person name="Strauss E."/>
            <person name="Arino J."/>
        </authorList>
    </citation>
    <scope>FUNCTION</scope>
    <scope>MUTAGENESIS OF HIS-459</scope>
    <scope>INTERACTION WITH CAB3 AND SIS2</scope>
</reference>
<reference key="10">
    <citation type="journal article" date="2009" name="Science">
        <title>Global analysis of Cdk1 substrate phosphorylation sites provides insights into evolution.</title>
        <authorList>
            <person name="Holt L.J."/>
            <person name="Tuch B.B."/>
            <person name="Villen J."/>
            <person name="Johnson A.D."/>
            <person name="Gygi S.P."/>
            <person name="Morgan D.O."/>
        </authorList>
    </citation>
    <scope>IDENTIFICATION BY MASS SPECTROMETRY [LARGE SCALE ANALYSIS]</scope>
</reference>
<reference key="11">
    <citation type="journal article" date="2012" name="Proc. Natl. Acad. Sci. U.S.A.">
        <title>N-terminal acetylome analyses and functional insights of the N-terminal acetyltransferase NatB.</title>
        <authorList>
            <person name="Van Damme P."/>
            <person name="Lasa M."/>
            <person name="Polevoda B."/>
            <person name="Gazquez C."/>
            <person name="Elosegui-Artola A."/>
            <person name="Kim D.S."/>
            <person name="De Juan-Pardo E."/>
            <person name="Demeyer K."/>
            <person name="Hole K."/>
            <person name="Larrea E."/>
            <person name="Timmerman E."/>
            <person name="Prieto J."/>
            <person name="Arnesen T."/>
            <person name="Sherman F."/>
            <person name="Gevaert K."/>
            <person name="Aldabe R."/>
        </authorList>
    </citation>
    <scope>IDENTIFICATION BY MASS SPECTROMETRY [LARGE SCALE ANALYSIS]</scope>
</reference>
<sequence length="674" mass="73649">MTNKSSLKNNRKGVASNTLSGAEQANIGSSAMPDTNSTGPFSSVSSLDTPVVRKSTSPTGSQTKSIMNASGTSGAVVSNTPEPGLKRIPTVTFSDPKLGSLRSDVEQTPPNQVARQSSEKKATSVHIAAEGANQGRNLKDINTKVPKDGEASASSFSTPTSILSNADMGNNISSLLAKKLSFTGGTDSILNSDNSSDSPRKEHPHFYVEDPLHTPSVRSRSNSTSPRPSVVVNTFNPINIEREGSISKTGEPTLLESVLEEAMSPNAVSNPLKRENIMTNMDPRLPQDDGKLHVLFGATGSLSVFKLKHMIRKLEEIYGRDKICIQVILTNSATKFFAMKYMRKNKKQHNSIDTSFNSTNSNAGNITGNKKKVASLEKFSIQKTSSNSAASQTNNKQEEEKQMASTTGFPSTLGGSRTYSNSSNVVSQHPQIELPAHIQFWTDQDEWDVWRQRTDPVLHIELRRWADILVVAPLTANTLAKIALGLCDNLLTSVIRAWNPTFPIFLAPSMGSGTFNSIMTKKHFRIIQEEMPWVTVFKPSEKVMGINGDIGLSGMMDANEIVGKIVVKLGGYPDVSAGKEEEEDEDNDEEDDNKKNDTGGKDEDNDDDDDDDDDDDDDDDDDDDDDDDDDDDDDDDDDDDDDDDDDDDDDEDDEDEDEDDEGKKKEDKGGLQRS</sequence>
<organism>
    <name type="scientific">Saccharomyces cerevisiae (strain ATCC 204508 / S288c)</name>
    <name type="common">Baker's yeast</name>
    <dbReference type="NCBI Taxonomy" id="559292"/>
    <lineage>
        <taxon>Eukaryota</taxon>
        <taxon>Fungi</taxon>
        <taxon>Dikarya</taxon>
        <taxon>Ascomycota</taxon>
        <taxon>Saccharomycotina</taxon>
        <taxon>Saccharomycetes</taxon>
        <taxon>Saccharomycetales</taxon>
        <taxon>Saccharomycetaceae</taxon>
        <taxon>Saccharomyces</taxon>
    </lineage>
</organism>
<proteinExistence type="evidence at protein level"/>
<keyword id="KW-0131">Cell cycle</keyword>
<keyword id="KW-0173">Coenzyme A biosynthesis</keyword>
<keyword id="KW-0597">Phosphoprotein</keyword>
<keyword id="KW-0650">Protein phosphatase inhibitor</keyword>
<keyword id="KW-1185">Reference proteome</keyword>
<accession>Q08438</accession>
<accession>D6W2B8</accession>
<accession>O00019</accession>
<gene>
    <name type="primary">VHS3</name>
    <name type="ordered locus">YOR054C</name>
    <name type="ORF">YOR29-05</name>
</gene>
<name>VHS3_YEAST</name>
<dbReference type="EMBL" id="Z70678">
    <property type="protein sequence ID" value="CAA94539.1"/>
    <property type="molecule type" value="Genomic_DNA"/>
</dbReference>
<dbReference type="EMBL" id="Z74961">
    <property type="protein sequence ID" value="CAA99246.1"/>
    <property type="molecule type" value="Genomic_DNA"/>
</dbReference>
<dbReference type="EMBL" id="BK006948">
    <property type="protein sequence ID" value="DAA10834.1"/>
    <property type="molecule type" value="Genomic_DNA"/>
</dbReference>
<dbReference type="PIR" id="S66937">
    <property type="entry name" value="S66937"/>
</dbReference>
<dbReference type="RefSeq" id="NP_014697.1">
    <property type="nucleotide sequence ID" value="NM_001183473.1"/>
</dbReference>
<dbReference type="SMR" id="Q08438"/>
<dbReference type="BioGRID" id="34453">
    <property type="interactions" value="195"/>
</dbReference>
<dbReference type="ComplexPortal" id="CPX-393">
    <property type="entry name" value="Phosphopantothenoylcysteine decarboxylase complex"/>
</dbReference>
<dbReference type="DIP" id="DIP-4172N"/>
<dbReference type="FunCoup" id="Q08438">
    <property type="interactions" value="85"/>
</dbReference>
<dbReference type="IntAct" id="Q08438">
    <property type="interactions" value="15"/>
</dbReference>
<dbReference type="MINT" id="Q08438"/>
<dbReference type="STRING" id="4932.YOR054C"/>
<dbReference type="MoonProt" id="Q08438"/>
<dbReference type="iPTMnet" id="Q08438"/>
<dbReference type="PaxDb" id="4932-YOR054C"/>
<dbReference type="PeptideAtlas" id="Q08438"/>
<dbReference type="EnsemblFungi" id="YOR054C_mRNA">
    <property type="protein sequence ID" value="YOR054C"/>
    <property type="gene ID" value="YOR054C"/>
</dbReference>
<dbReference type="GeneID" id="854220"/>
<dbReference type="KEGG" id="sce:YOR054C"/>
<dbReference type="AGR" id="SGD:S000005580"/>
<dbReference type="SGD" id="S000005580">
    <property type="gene designation" value="VHS3"/>
</dbReference>
<dbReference type="VEuPathDB" id="FungiDB:YOR054C"/>
<dbReference type="eggNOG" id="KOG0672">
    <property type="taxonomic scope" value="Eukaryota"/>
</dbReference>
<dbReference type="GeneTree" id="ENSGT00940000176509"/>
<dbReference type="HOGENOM" id="CLU_014402_1_0_1"/>
<dbReference type="InParanoid" id="Q08438"/>
<dbReference type="OMA" id="TFNPINI"/>
<dbReference type="OrthoDB" id="1532798at2759"/>
<dbReference type="BioCyc" id="MetaCyc:MONOMER3O-317"/>
<dbReference type="BioCyc" id="YEAST:MONOMER3O-317"/>
<dbReference type="BioGRID-ORCS" id="854220">
    <property type="hits" value="1 hit in 10 CRISPR screens"/>
</dbReference>
<dbReference type="PRO" id="PR:Q08438"/>
<dbReference type="Proteomes" id="UP000002311">
    <property type="component" value="Chromosome XV"/>
</dbReference>
<dbReference type="RNAct" id="Q08438">
    <property type="molecule type" value="protein"/>
</dbReference>
<dbReference type="GO" id="GO:1990143">
    <property type="term" value="C:CoA-synthesizing protein complex"/>
    <property type="evidence" value="ECO:0000314"/>
    <property type="project" value="SGD"/>
</dbReference>
<dbReference type="GO" id="GO:0071513">
    <property type="term" value="C:phosphopantothenoylcysteine decarboxylase complex"/>
    <property type="evidence" value="ECO:0000314"/>
    <property type="project" value="SGD"/>
</dbReference>
<dbReference type="GO" id="GO:0003824">
    <property type="term" value="F:catalytic activity"/>
    <property type="evidence" value="ECO:0007669"/>
    <property type="project" value="InterPro"/>
</dbReference>
<dbReference type="GO" id="GO:0010181">
    <property type="term" value="F:FMN binding"/>
    <property type="evidence" value="ECO:0000318"/>
    <property type="project" value="GO_Central"/>
</dbReference>
<dbReference type="GO" id="GO:0042802">
    <property type="term" value="F:identical protein binding"/>
    <property type="evidence" value="ECO:0000353"/>
    <property type="project" value="IntAct"/>
</dbReference>
<dbReference type="GO" id="GO:0004864">
    <property type="term" value="F:protein phosphatase inhibitor activity"/>
    <property type="evidence" value="ECO:0000314"/>
    <property type="project" value="SGD"/>
</dbReference>
<dbReference type="GO" id="GO:0015937">
    <property type="term" value="P:coenzyme A biosynthetic process"/>
    <property type="evidence" value="ECO:0000316"/>
    <property type="project" value="SGD"/>
</dbReference>
<dbReference type="GO" id="GO:0030003">
    <property type="term" value="P:intracellular monoatomic cation homeostasis"/>
    <property type="evidence" value="ECO:0000316"/>
    <property type="project" value="SGD"/>
</dbReference>
<dbReference type="Gene3D" id="3.40.50.1950">
    <property type="entry name" value="Flavin prenyltransferase-like"/>
    <property type="match status" value="1"/>
</dbReference>
<dbReference type="InterPro" id="IPR036551">
    <property type="entry name" value="Flavin_trans-like"/>
</dbReference>
<dbReference type="InterPro" id="IPR003382">
    <property type="entry name" value="Flavoprotein"/>
</dbReference>
<dbReference type="PANTHER" id="PTHR14359">
    <property type="entry name" value="HOMO-OLIGOMERIC FLAVIN CONTAINING CYS DECARBOXYLASE FAMILY"/>
    <property type="match status" value="1"/>
</dbReference>
<dbReference type="PANTHER" id="PTHR14359:SF17">
    <property type="entry name" value="PHOSPHOPANTOTHENOYLCYSTEINE DECARBOXYLASE SUBUNIT SIS2-RELATED"/>
    <property type="match status" value="1"/>
</dbReference>
<dbReference type="Pfam" id="PF02441">
    <property type="entry name" value="Flavoprotein"/>
    <property type="match status" value="1"/>
</dbReference>
<dbReference type="SUPFAM" id="SSF52507">
    <property type="entry name" value="Homo-oligomeric flavin-containing Cys decarboxylases, HFCD"/>
    <property type="match status" value="2"/>
</dbReference>
<comment type="function">
    <text evidence="2 3 4">Component of the phosphopantothenoylcysteine decarboxylase (PPCDC) involved in the coenzyme A synthesis. Acts as an inhibitory subunit of protein phosphatase PPZ1, which is involved in many cellular processes such as G1-S transition or salt tolerance.</text>
</comment>
<comment type="subunit">
    <text evidence="3 4">Interacts with the C-terminal domain of PPZ1. Component of the phosphopantothenoylcysteine decarboxylase (PPCDC) complex, a heterotrimer composed of CAB3, SIS2 and VHS3.</text>
</comment>
<comment type="interaction">
    <interactant intactId="EBI-30482">
        <id>Q08438</id>
    </interactant>
    <interactant intactId="EBI-26778">
        <id>P36076</id>
        <label>CAB3</label>
    </interactant>
    <organismsDiffer>false</organismsDiffer>
    <experiments>9</experiments>
</comment>
<comment type="interaction">
    <interactant intactId="EBI-30482">
        <id>Q08438</id>
    </interactant>
    <interactant intactId="EBI-13807">
        <id>P26570</id>
        <label>PPZ1</label>
    </interactant>
    <organismsDiffer>false</organismsDiffer>
    <experiments>5</experiments>
</comment>
<comment type="interaction">
    <interactant intactId="EBI-30482">
        <id>Q08438</id>
    </interactant>
    <interactant intactId="EBI-17250">
        <id>P36024</id>
        <label>SIS2</label>
    </interactant>
    <organismsDiffer>false</organismsDiffer>
    <experiments>4</experiments>
</comment>
<comment type="interaction">
    <interactant intactId="EBI-30482">
        <id>Q08438</id>
    </interactant>
    <interactant intactId="EBI-30482">
        <id>Q08438</id>
        <label>VHS3</label>
    </interactant>
    <organismsDiffer>false</organismsDiffer>
    <experiments>4</experiments>
</comment>
<comment type="similarity">
    <text evidence="5">Belongs to the HFCD (homooligomeric flavin containing Cys decarboxylase) superfamily.</text>
</comment>